<dbReference type="EMBL" id="AM286415">
    <property type="protein sequence ID" value="CAL11685.1"/>
    <property type="molecule type" value="Genomic_DNA"/>
</dbReference>
<dbReference type="RefSeq" id="WP_011816067.1">
    <property type="nucleotide sequence ID" value="NC_008800.1"/>
</dbReference>
<dbReference type="RefSeq" id="YP_001005900.1">
    <property type="nucleotide sequence ID" value="NC_008800.1"/>
</dbReference>
<dbReference type="SMR" id="A1JN04"/>
<dbReference type="KEGG" id="yen:YE1610"/>
<dbReference type="PATRIC" id="fig|393305.7.peg.1744"/>
<dbReference type="eggNOG" id="COG2814">
    <property type="taxonomic scope" value="Bacteria"/>
</dbReference>
<dbReference type="HOGENOM" id="CLU_001265_57_3_6"/>
<dbReference type="OrthoDB" id="65739at2"/>
<dbReference type="Proteomes" id="UP000000642">
    <property type="component" value="Chromosome"/>
</dbReference>
<dbReference type="GO" id="GO:0005886">
    <property type="term" value="C:plasma membrane"/>
    <property type="evidence" value="ECO:0007669"/>
    <property type="project" value="UniProtKB-SubCell"/>
</dbReference>
<dbReference type="GO" id="GO:0022857">
    <property type="term" value="F:transmembrane transporter activity"/>
    <property type="evidence" value="ECO:0007669"/>
    <property type="project" value="UniProtKB-UniRule"/>
</dbReference>
<dbReference type="CDD" id="cd17391">
    <property type="entry name" value="MFS_MdtG_MDR_like"/>
    <property type="match status" value="1"/>
</dbReference>
<dbReference type="FunFam" id="1.20.1250.20:FF:000020">
    <property type="entry name" value="Multidrug resistance protein MdtG"/>
    <property type="match status" value="1"/>
</dbReference>
<dbReference type="FunFam" id="1.20.1250.20:FF:000022">
    <property type="entry name" value="Multidrug resistance protein MdtG"/>
    <property type="match status" value="1"/>
</dbReference>
<dbReference type="Gene3D" id="1.20.1250.20">
    <property type="entry name" value="MFS general substrate transporter like domains"/>
    <property type="match status" value="2"/>
</dbReference>
<dbReference type="HAMAP" id="MF_01528">
    <property type="entry name" value="MFS_MdtG"/>
    <property type="match status" value="1"/>
</dbReference>
<dbReference type="InterPro" id="IPR011701">
    <property type="entry name" value="MFS"/>
</dbReference>
<dbReference type="InterPro" id="IPR020846">
    <property type="entry name" value="MFS_dom"/>
</dbReference>
<dbReference type="InterPro" id="IPR050497">
    <property type="entry name" value="MFS_MdtG_subfamily"/>
</dbReference>
<dbReference type="InterPro" id="IPR005828">
    <property type="entry name" value="MFS_sugar_transport-like"/>
</dbReference>
<dbReference type="InterPro" id="IPR036259">
    <property type="entry name" value="MFS_trans_sf"/>
</dbReference>
<dbReference type="InterPro" id="IPR023692">
    <property type="entry name" value="Mutidrug-R_MdtG"/>
</dbReference>
<dbReference type="InterPro" id="IPR001958">
    <property type="entry name" value="Tet-R_TetA/multi-R_MdtG-like"/>
</dbReference>
<dbReference type="NCBIfam" id="NF007372">
    <property type="entry name" value="PRK09874.1"/>
    <property type="match status" value="1"/>
</dbReference>
<dbReference type="PANTHER" id="PTHR43414">
    <property type="entry name" value="MULTIDRUG RESISTANCE PROTEIN MDTG"/>
    <property type="match status" value="1"/>
</dbReference>
<dbReference type="PANTHER" id="PTHR43414:SF6">
    <property type="entry name" value="MULTIDRUG RESISTANCE PROTEIN MDTG"/>
    <property type="match status" value="1"/>
</dbReference>
<dbReference type="Pfam" id="PF07690">
    <property type="entry name" value="MFS_1"/>
    <property type="match status" value="1"/>
</dbReference>
<dbReference type="Pfam" id="PF00083">
    <property type="entry name" value="Sugar_tr"/>
    <property type="match status" value="1"/>
</dbReference>
<dbReference type="PRINTS" id="PR01035">
    <property type="entry name" value="TCRTETA"/>
</dbReference>
<dbReference type="SUPFAM" id="SSF103473">
    <property type="entry name" value="MFS general substrate transporter"/>
    <property type="match status" value="1"/>
</dbReference>
<dbReference type="PROSITE" id="PS50850">
    <property type="entry name" value="MFS"/>
    <property type="match status" value="1"/>
</dbReference>
<sequence length="414" mass="44770">MTSAPQSVNWKRNLFVTWLGCFLTGAAFSLIMPFLPLYVEELGVSGHQSLNMWSGLVFSITFLFSAIAAPFWGSLADRKGRKIMLLRSALGMGIVMVLMGMAQNIWQFLALRALLGLLGGFIPNANALIATQVPRNKSGWALGTLSTGGVSGALIGPLIGGLLADNYGLRPVFFITAAVLFACFVMTWFYVREQFAPVLKKDMLNGRQVFNSLKNPKLILSLFVTTMIIQIATGSIAPILTLYVRELAGDIHNLAFVSGMIASVPGVAALISAPRLGKLGDKIGPERILIAMLALSVLILIPMAFVQTPLQLGILRFLLGATDGALLPAVQTLLIYNCTNQVAGRIFSYNQSFRDVGNVSGPLLGAAVSASYGFRAVFCVTAVVVLFNALYSYWCLQRQPLKAQQRAIQQRQDS</sequence>
<name>MDTG_YERE8</name>
<reference key="1">
    <citation type="journal article" date="2006" name="PLoS Genet.">
        <title>The complete genome sequence and comparative genome analysis of the high pathogenicity Yersinia enterocolitica strain 8081.</title>
        <authorList>
            <person name="Thomson N.R."/>
            <person name="Howard S."/>
            <person name="Wren B.W."/>
            <person name="Holden M.T.G."/>
            <person name="Crossman L."/>
            <person name="Challis G.L."/>
            <person name="Churcher C."/>
            <person name="Mungall K."/>
            <person name="Brooks K."/>
            <person name="Chillingworth T."/>
            <person name="Feltwell T."/>
            <person name="Abdellah Z."/>
            <person name="Hauser H."/>
            <person name="Jagels K."/>
            <person name="Maddison M."/>
            <person name="Moule S."/>
            <person name="Sanders M."/>
            <person name="Whitehead S."/>
            <person name="Quail M.A."/>
            <person name="Dougan G."/>
            <person name="Parkhill J."/>
            <person name="Prentice M.B."/>
        </authorList>
    </citation>
    <scope>NUCLEOTIDE SEQUENCE [LARGE SCALE GENOMIC DNA]</scope>
    <source>
        <strain>NCTC 13174 / 8081</strain>
    </source>
</reference>
<proteinExistence type="inferred from homology"/>
<organism>
    <name type="scientific">Yersinia enterocolitica serotype O:8 / biotype 1B (strain NCTC 13174 / 8081)</name>
    <dbReference type="NCBI Taxonomy" id="393305"/>
    <lineage>
        <taxon>Bacteria</taxon>
        <taxon>Pseudomonadati</taxon>
        <taxon>Pseudomonadota</taxon>
        <taxon>Gammaproteobacteria</taxon>
        <taxon>Enterobacterales</taxon>
        <taxon>Yersiniaceae</taxon>
        <taxon>Yersinia</taxon>
    </lineage>
</organism>
<keyword id="KW-0997">Cell inner membrane</keyword>
<keyword id="KW-1003">Cell membrane</keyword>
<keyword id="KW-0472">Membrane</keyword>
<keyword id="KW-0812">Transmembrane</keyword>
<keyword id="KW-1133">Transmembrane helix</keyword>
<keyword id="KW-0813">Transport</keyword>
<accession>A1JN04</accession>
<comment type="subcellular location">
    <subcellularLocation>
        <location evidence="1">Cell inner membrane</location>
        <topology evidence="1">Multi-pass membrane protein</topology>
    </subcellularLocation>
</comment>
<comment type="similarity">
    <text evidence="1">Belongs to the major facilitator superfamily. DHA1 family. MdtG (TC 2.A.1.2.20) subfamily.</text>
</comment>
<gene>
    <name evidence="1" type="primary">mdtG</name>
    <name type="ordered locus">YE1610</name>
</gene>
<protein>
    <recommendedName>
        <fullName evidence="1">Multidrug resistance protein MdtG</fullName>
    </recommendedName>
</protein>
<feature type="chain" id="PRO_0000414584" description="Multidrug resistance protein MdtG">
    <location>
        <begin position="1"/>
        <end position="414"/>
    </location>
</feature>
<feature type="transmembrane region" description="Helical" evidence="1">
    <location>
        <begin position="14"/>
        <end position="34"/>
    </location>
</feature>
<feature type="transmembrane region" description="Helical" evidence="1">
    <location>
        <begin position="56"/>
        <end position="76"/>
    </location>
</feature>
<feature type="transmembrane region" description="Helical" evidence="1">
    <location>
        <begin position="89"/>
        <end position="109"/>
    </location>
</feature>
<feature type="transmembrane region" description="Helical" evidence="1">
    <location>
        <begin position="113"/>
        <end position="133"/>
    </location>
</feature>
<feature type="transmembrane region" description="Helical" evidence="1">
    <location>
        <begin position="144"/>
        <end position="164"/>
    </location>
</feature>
<feature type="transmembrane region" description="Helical" evidence="1">
    <location>
        <begin position="171"/>
        <end position="191"/>
    </location>
</feature>
<feature type="transmembrane region" description="Helical" evidence="1">
    <location>
        <begin position="219"/>
        <end position="239"/>
    </location>
</feature>
<feature type="transmembrane region" description="Helical" evidence="1">
    <location>
        <begin position="254"/>
        <end position="274"/>
    </location>
</feature>
<feature type="transmembrane region" description="Helical" evidence="1">
    <location>
        <begin position="288"/>
        <end position="308"/>
    </location>
</feature>
<feature type="transmembrane region" description="Helical" evidence="1">
    <location>
        <begin position="376"/>
        <end position="396"/>
    </location>
</feature>
<evidence type="ECO:0000255" key="1">
    <source>
        <dbReference type="HAMAP-Rule" id="MF_01528"/>
    </source>
</evidence>